<protein>
    <recommendedName>
        <fullName>Uncharacterized protein R447</fullName>
    </recommendedName>
</protein>
<dbReference type="EMBL" id="AY653733">
    <property type="protein sequence ID" value="AAV50713.1"/>
    <property type="molecule type" value="Genomic_DNA"/>
</dbReference>
<dbReference type="KEGG" id="vg:9925071"/>
<dbReference type="OrthoDB" id="21078at10239"/>
<dbReference type="Proteomes" id="UP000001134">
    <property type="component" value="Genome"/>
</dbReference>
<dbReference type="InterPro" id="IPR043977">
    <property type="entry name" value="DUF5759"/>
</dbReference>
<dbReference type="Pfam" id="PF19063">
    <property type="entry name" value="DUF5759"/>
    <property type="match status" value="1"/>
</dbReference>
<name>YR447_MIMIV</name>
<reference key="1">
    <citation type="journal article" date="2004" name="Science">
        <title>The 1.2-megabase genome sequence of Mimivirus.</title>
        <authorList>
            <person name="Raoult D."/>
            <person name="Audic S."/>
            <person name="Robert C."/>
            <person name="Abergel C."/>
            <person name="Renesto P."/>
            <person name="Ogata H."/>
            <person name="La Scola B."/>
            <person name="Susan M."/>
            <person name="Claverie J.-M."/>
        </authorList>
    </citation>
    <scope>NUCLEOTIDE SEQUENCE [LARGE SCALE GENOMIC DNA]</scope>
    <source>
        <strain>Rowbotham-Bradford</strain>
    </source>
</reference>
<gene>
    <name type="ordered locus">MIMI_R447</name>
</gene>
<keyword id="KW-1185">Reference proteome</keyword>
<organism>
    <name type="scientific">Acanthamoeba polyphaga mimivirus</name>
    <name type="common">APMV</name>
    <dbReference type="NCBI Taxonomy" id="212035"/>
    <lineage>
        <taxon>Viruses</taxon>
        <taxon>Varidnaviria</taxon>
        <taxon>Bamfordvirae</taxon>
        <taxon>Nucleocytoviricota</taxon>
        <taxon>Megaviricetes</taxon>
        <taxon>Imitervirales</taxon>
        <taxon>Mimiviridae</taxon>
        <taxon>Megamimivirinae</taxon>
        <taxon>Mimivirus</taxon>
        <taxon>Mimivirus bradfordmassiliense</taxon>
    </lineage>
</organism>
<feature type="chain" id="PRO_0000253919" description="Uncharacterized protein R447">
    <location>
        <begin position="1"/>
        <end position="123"/>
    </location>
</feature>
<feature type="region of interest" description="Disordered" evidence="1">
    <location>
        <begin position="100"/>
        <end position="123"/>
    </location>
</feature>
<evidence type="ECO:0000256" key="1">
    <source>
        <dbReference type="SAM" id="MobiDB-lite"/>
    </source>
</evidence>
<organismHost>
    <name type="scientific">Acanthamoeba polyphaga</name>
    <name type="common">Amoeba</name>
    <dbReference type="NCBI Taxonomy" id="5757"/>
</organismHost>
<sequence length="123" mass="14520">MVLNDDDLYKKHDQLVNLKRQTYEKIFNRCVNTIKLSSDAGELICLFQIPNFLFGTGYPIVNIKYCANYIINKLSEMNENIETTFIDPNILFIDWRKKPNKQPKTTHHFSTNSSEYKSRKSKH</sequence>
<accession>Q5UQP1</accession>
<proteinExistence type="predicted"/>